<comment type="function">
    <text evidence="1">Catalyzes the attachment of tyrosine to tRNA(Tyr) in a two-step reaction: tyrosine is first activated by ATP to form Tyr-AMP and then transferred to the acceptor end of tRNA(Tyr).</text>
</comment>
<comment type="catalytic activity">
    <reaction evidence="1">
        <text>tRNA(Tyr) + L-tyrosine + ATP = L-tyrosyl-tRNA(Tyr) + AMP + diphosphate + H(+)</text>
        <dbReference type="Rhea" id="RHEA:10220"/>
        <dbReference type="Rhea" id="RHEA-COMP:9706"/>
        <dbReference type="Rhea" id="RHEA-COMP:9707"/>
        <dbReference type="ChEBI" id="CHEBI:15378"/>
        <dbReference type="ChEBI" id="CHEBI:30616"/>
        <dbReference type="ChEBI" id="CHEBI:33019"/>
        <dbReference type="ChEBI" id="CHEBI:58315"/>
        <dbReference type="ChEBI" id="CHEBI:78442"/>
        <dbReference type="ChEBI" id="CHEBI:78536"/>
        <dbReference type="ChEBI" id="CHEBI:456215"/>
        <dbReference type="EC" id="6.1.1.1"/>
    </reaction>
</comment>
<comment type="subunit">
    <text evidence="1">Homodimer.</text>
</comment>
<comment type="subcellular location">
    <subcellularLocation>
        <location evidence="1">Cytoplasm</location>
    </subcellularLocation>
</comment>
<comment type="similarity">
    <text evidence="1">Belongs to the class-I aminoacyl-tRNA synthetase family. TyrS type 2 subfamily.</text>
</comment>
<evidence type="ECO:0000255" key="1">
    <source>
        <dbReference type="HAMAP-Rule" id="MF_02007"/>
    </source>
</evidence>
<proteinExistence type="inferred from homology"/>
<accession>Q9I5Q3</accession>
<reference key="1">
    <citation type="journal article" date="2000" name="Nature">
        <title>Complete genome sequence of Pseudomonas aeruginosa PAO1, an opportunistic pathogen.</title>
        <authorList>
            <person name="Stover C.K."/>
            <person name="Pham X.-Q.T."/>
            <person name="Erwin A.L."/>
            <person name="Mizoguchi S.D."/>
            <person name="Warrener P."/>
            <person name="Hickey M.J."/>
            <person name="Brinkman F.S.L."/>
            <person name="Hufnagle W.O."/>
            <person name="Kowalik D.J."/>
            <person name="Lagrou M."/>
            <person name="Garber R.L."/>
            <person name="Goltry L."/>
            <person name="Tolentino E."/>
            <person name="Westbrock-Wadman S."/>
            <person name="Yuan Y."/>
            <person name="Brody L.L."/>
            <person name="Coulter S.N."/>
            <person name="Folger K.R."/>
            <person name="Kas A."/>
            <person name="Larbig K."/>
            <person name="Lim R.M."/>
            <person name="Smith K.A."/>
            <person name="Spencer D.H."/>
            <person name="Wong G.K.-S."/>
            <person name="Wu Z."/>
            <person name="Paulsen I.T."/>
            <person name="Reizer J."/>
            <person name="Saier M.H. Jr."/>
            <person name="Hancock R.E.W."/>
            <person name="Lory S."/>
            <person name="Olson M.V."/>
        </authorList>
    </citation>
    <scope>NUCLEOTIDE SEQUENCE [LARGE SCALE GENOMIC DNA]</scope>
    <source>
        <strain>ATCC 15692 / DSM 22644 / CIP 104116 / JCM 14847 / LMG 12228 / 1C / PRS 101 / PAO1</strain>
    </source>
</reference>
<feature type="chain" id="PRO_0000236750" description="Tyrosine--tRNA ligase 2">
    <location>
        <begin position="1"/>
        <end position="399"/>
    </location>
</feature>
<feature type="domain" description="S4 RNA-binding" evidence="1">
    <location>
        <begin position="336"/>
        <end position="396"/>
    </location>
</feature>
<feature type="short sequence motif" description="'HIGH' region">
    <location>
        <begin position="42"/>
        <end position="51"/>
    </location>
</feature>
<feature type="short sequence motif" description="'KMSKS' region">
    <location>
        <begin position="226"/>
        <end position="230"/>
    </location>
</feature>
<feature type="binding site" evidence="1">
    <location>
        <position position="229"/>
    </location>
    <ligand>
        <name>ATP</name>
        <dbReference type="ChEBI" id="CHEBI:30616"/>
    </ligand>
</feature>
<dbReference type="EC" id="6.1.1.1" evidence="1"/>
<dbReference type="EMBL" id="AE004091">
    <property type="protein sequence ID" value="AAG04057.1"/>
    <property type="molecule type" value="Genomic_DNA"/>
</dbReference>
<dbReference type="PIR" id="C83563">
    <property type="entry name" value="C83563"/>
</dbReference>
<dbReference type="SMR" id="Q9I5Q3"/>
<dbReference type="STRING" id="208964.PA0668"/>
<dbReference type="PaxDb" id="208964-PA0668"/>
<dbReference type="KEGG" id="pae:PA0668"/>
<dbReference type="PATRIC" id="fig|208964.12.peg.699"/>
<dbReference type="PseudoCAP" id="PA0668"/>
<dbReference type="HOGENOM" id="CLU_024003_5_0_6"/>
<dbReference type="InParanoid" id="Q9I5Q3"/>
<dbReference type="OrthoDB" id="9804243at2"/>
<dbReference type="PhylomeDB" id="Q9I5Q3"/>
<dbReference type="BioCyc" id="PAER208964:G1FZ6-673-MONOMER"/>
<dbReference type="Proteomes" id="UP000002438">
    <property type="component" value="Chromosome"/>
</dbReference>
<dbReference type="GO" id="GO:0005829">
    <property type="term" value="C:cytosol"/>
    <property type="evidence" value="ECO:0000318"/>
    <property type="project" value="GO_Central"/>
</dbReference>
<dbReference type="GO" id="GO:0005524">
    <property type="term" value="F:ATP binding"/>
    <property type="evidence" value="ECO:0007669"/>
    <property type="project" value="UniProtKB-UniRule"/>
</dbReference>
<dbReference type="GO" id="GO:0003723">
    <property type="term" value="F:RNA binding"/>
    <property type="evidence" value="ECO:0007669"/>
    <property type="project" value="UniProtKB-KW"/>
</dbReference>
<dbReference type="GO" id="GO:0004831">
    <property type="term" value="F:tyrosine-tRNA ligase activity"/>
    <property type="evidence" value="ECO:0000318"/>
    <property type="project" value="GO_Central"/>
</dbReference>
<dbReference type="GO" id="GO:0043039">
    <property type="term" value="P:tRNA aminoacylation"/>
    <property type="evidence" value="ECO:0000318"/>
    <property type="project" value="GO_Central"/>
</dbReference>
<dbReference type="GO" id="GO:0006437">
    <property type="term" value="P:tyrosyl-tRNA aminoacylation"/>
    <property type="evidence" value="ECO:0007669"/>
    <property type="project" value="UniProtKB-UniRule"/>
</dbReference>
<dbReference type="CDD" id="cd00805">
    <property type="entry name" value="TyrRS_core"/>
    <property type="match status" value="1"/>
</dbReference>
<dbReference type="FunFam" id="1.10.240.10:FF:000006">
    <property type="entry name" value="Tyrosine--tRNA ligase"/>
    <property type="match status" value="1"/>
</dbReference>
<dbReference type="FunFam" id="3.40.50.620:FF:000061">
    <property type="entry name" value="Tyrosine--tRNA ligase"/>
    <property type="match status" value="1"/>
</dbReference>
<dbReference type="Gene3D" id="3.40.50.620">
    <property type="entry name" value="HUPs"/>
    <property type="match status" value="1"/>
</dbReference>
<dbReference type="Gene3D" id="3.10.290.10">
    <property type="entry name" value="RNA-binding S4 domain"/>
    <property type="match status" value="1"/>
</dbReference>
<dbReference type="Gene3D" id="1.10.240.10">
    <property type="entry name" value="Tyrosyl-Transfer RNA Synthetase"/>
    <property type="match status" value="1"/>
</dbReference>
<dbReference type="HAMAP" id="MF_02007">
    <property type="entry name" value="Tyr_tRNA_synth_type2"/>
    <property type="match status" value="1"/>
</dbReference>
<dbReference type="InterPro" id="IPR001412">
    <property type="entry name" value="aa-tRNA-synth_I_CS"/>
</dbReference>
<dbReference type="InterPro" id="IPR002305">
    <property type="entry name" value="aa-tRNA-synth_Ic"/>
</dbReference>
<dbReference type="InterPro" id="IPR014729">
    <property type="entry name" value="Rossmann-like_a/b/a_fold"/>
</dbReference>
<dbReference type="InterPro" id="IPR036986">
    <property type="entry name" value="S4_RNA-bd_sf"/>
</dbReference>
<dbReference type="InterPro" id="IPR002307">
    <property type="entry name" value="Tyr-tRNA-ligase"/>
</dbReference>
<dbReference type="InterPro" id="IPR024088">
    <property type="entry name" value="Tyr-tRNA-ligase_bac-type"/>
</dbReference>
<dbReference type="InterPro" id="IPR024108">
    <property type="entry name" value="Tyr-tRNA-ligase_bac_2"/>
</dbReference>
<dbReference type="NCBIfam" id="TIGR00234">
    <property type="entry name" value="tyrS"/>
    <property type="match status" value="1"/>
</dbReference>
<dbReference type="PANTHER" id="PTHR11766:SF1">
    <property type="entry name" value="TYROSINE--TRNA LIGASE"/>
    <property type="match status" value="1"/>
</dbReference>
<dbReference type="PANTHER" id="PTHR11766">
    <property type="entry name" value="TYROSYL-TRNA SYNTHETASE"/>
    <property type="match status" value="1"/>
</dbReference>
<dbReference type="Pfam" id="PF00579">
    <property type="entry name" value="tRNA-synt_1b"/>
    <property type="match status" value="1"/>
</dbReference>
<dbReference type="PRINTS" id="PR01040">
    <property type="entry name" value="TRNASYNTHTYR"/>
</dbReference>
<dbReference type="SUPFAM" id="SSF55174">
    <property type="entry name" value="Alpha-L RNA-binding motif"/>
    <property type="match status" value="1"/>
</dbReference>
<dbReference type="SUPFAM" id="SSF52374">
    <property type="entry name" value="Nucleotidylyl transferase"/>
    <property type="match status" value="1"/>
</dbReference>
<dbReference type="PROSITE" id="PS00178">
    <property type="entry name" value="AA_TRNA_LIGASE_I"/>
    <property type="match status" value="1"/>
</dbReference>
<dbReference type="PROSITE" id="PS50889">
    <property type="entry name" value="S4"/>
    <property type="match status" value="1"/>
</dbReference>
<protein>
    <recommendedName>
        <fullName evidence="1">Tyrosine--tRNA ligase 2</fullName>
        <ecNumber evidence="1">6.1.1.1</ecNumber>
    </recommendedName>
    <alternativeName>
        <fullName evidence="1">Tyrosyl-tRNA synthetase 2</fullName>
        <shortName evidence="1">TyrRS 2</shortName>
    </alternativeName>
</protein>
<sequence>MKSVEEQLALIQRGADEILVEAELVAKLKRGQPLRIKAGFDPTAPDLHLGHTVLINKLRQFQDLGHQVIFLIGDFTGMIGDPSGKSVTRPPLTREQVLENAETYKSQVFKILDPAKTEVAFNSTWMDQLTPADFIRLASQYTVARMLERDDFSKRYASNQPIAIHEFLYPLVQGYDSVALKADVELGGTDQKFNLLMGRELQRAYGQEAQVILTMPLLEGLDGVKKMSKSLGNYIGIQEAPGVMYSKLVSIPDTLMWRYFELLSFRSLDEIDSFRKDVEAGANPRDIKIKLAEEIVARFHGEEAAASAHKSAGNRLKEGELPEDLPEIELSSPEDMPVASVLNKAGLVKNAAAARDLLGAGSVKVDGQVVDRTFMLALGETRVFQAGKKAFARITLKAE</sequence>
<organism>
    <name type="scientific">Pseudomonas aeruginosa (strain ATCC 15692 / DSM 22644 / CIP 104116 / JCM 14847 / LMG 12228 / 1C / PRS 101 / PAO1)</name>
    <dbReference type="NCBI Taxonomy" id="208964"/>
    <lineage>
        <taxon>Bacteria</taxon>
        <taxon>Pseudomonadati</taxon>
        <taxon>Pseudomonadota</taxon>
        <taxon>Gammaproteobacteria</taxon>
        <taxon>Pseudomonadales</taxon>
        <taxon>Pseudomonadaceae</taxon>
        <taxon>Pseudomonas</taxon>
    </lineage>
</organism>
<gene>
    <name evidence="1" type="primary">tyrS2</name>
    <name type="ordered locus">PA0668</name>
</gene>
<keyword id="KW-0030">Aminoacyl-tRNA synthetase</keyword>
<keyword id="KW-0067">ATP-binding</keyword>
<keyword id="KW-0963">Cytoplasm</keyword>
<keyword id="KW-0436">Ligase</keyword>
<keyword id="KW-0547">Nucleotide-binding</keyword>
<keyword id="KW-0648">Protein biosynthesis</keyword>
<keyword id="KW-1185">Reference proteome</keyword>
<keyword id="KW-0694">RNA-binding</keyword>
<name>SYY2_PSEAE</name>